<organism>
    <name type="scientific">Schizosaccharomyces pombe (strain 972 / ATCC 24843)</name>
    <name type="common">Fission yeast</name>
    <dbReference type="NCBI Taxonomy" id="284812"/>
    <lineage>
        <taxon>Eukaryota</taxon>
        <taxon>Fungi</taxon>
        <taxon>Dikarya</taxon>
        <taxon>Ascomycota</taxon>
        <taxon>Taphrinomycotina</taxon>
        <taxon>Schizosaccharomycetes</taxon>
        <taxon>Schizosaccharomycetales</taxon>
        <taxon>Schizosaccharomycetaceae</taxon>
        <taxon>Schizosaccharomyces</taxon>
    </lineage>
</organism>
<comment type="similarity">
    <text evidence="2">Belongs to the UPF0768 family.</text>
</comment>
<accession>Q8J1M8</accession>
<name>YLO4_SCHPO</name>
<evidence type="ECO:0000256" key="1">
    <source>
        <dbReference type="SAM" id="MobiDB-lite"/>
    </source>
</evidence>
<evidence type="ECO:0000305" key="2"/>
<sequence length="137" mass="15761">MFLFLPIPLNVQDIWKVNSKYKHVLLTCPVCQNKTVRVYRLVKSLALIVLPVLPVYTSKVLRCSHCGWYEPVDSAMIDQRRRREDLPTPERPEASAQQHAFFPGSSSQQTDIPNVRPQPHIPPPRKSDEAPPPYSYK</sequence>
<keyword id="KW-1185">Reference proteome</keyword>
<dbReference type="EMBL" id="CU329670">
    <property type="protein sequence ID" value="CAD47847.2"/>
    <property type="molecule type" value="Genomic_DNA"/>
</dbReference>
<dbReference type="RefSeq" id="NP_001018291.2">
    <property type="nucleotide sequence ID" value="NM_001020235.2"/>
</dbReference>
<dbReference type="BioGRID" id="280468">
    <property type="interactions" value="1"/>
</dbReference>
<dbReference type="STRING" id="284812.Q8J1M8"/>
<dbReference type="iPTMnet" id="Q8J1M8"/>
<dbReference type="PaxDb" id="4896-SPAC1952.04c.1"/>
<dbReference type="EnsemblFungi" id="SPAC1952.04c.1">
    <property type="protein sequence ID" value="SPAC1952.04c.1:pep"/>
    <property type="gene ID" value="SPAC1952.04c"/>
</dbReference>
<dbReference type="KEGG" id="spo:3361392"/>
<dbReference type="PomBase" id="SPAC1952.04c"/>
<dbReference type="VEuPathDB" id="FungiDB:SPAC1952.04c"/>
<dbReference type="HOGENOM" id="CLU_1836308_0_0_1"/>
<dbReference type="InParanoid" id="Q8J1M8"/>
<dbReference type="PRO" id="PR:Q8J1M8"/>
<dbReference type="Proteomes" id="UP000002485">
    <property type="component" value="Chromosome I"/>
</dbReference>
<dbReference type="PANTHER" id="PTHR28139">
    <property type="entry name" value="UPF0768 PROTEIN YBL029C-A"/>
    <property type="match status" value="1"/>
</dbReference>
<dbReference type="PANTHER" id="PTHR28139:SF1">
    <property type="entry name" value="UPF0768 PROTEIN YBL029C-A"/>
    <property type="match status" value="1"/>
</dbReference>
<reference key="1">
    <citation type="journal article" date="2002" name="Nature">
        <title>The genome sequence of Schizosaccharomyces pombe.</title>
        <authorList>
            <person name="Wood V."/>
            <person name="Gwilliam R."/>
            <person name="Rajandream M.A."/>
            <person name="Lyne M.H."/>
            <person name="Lyne R."/>
            <person name="Stewart A."/>
            <person name="Sgouros J.G."/>
            <person name="Peat N."/>
            <person name="Hayles J."/>
            <person name="Baker S.G."/>
            <person name="Basham D."/>
            <person name="Bowman S."/>
            <person name="Brooks K."/>
            <person name="Brown D."/>
            <person name="Brown S."/>
            <person name="Chillingworth T."/>
            <person name="Churcher C.M."/>
            <person name="Collins M."/>
            <person name="Connor R."/>
            <person name="Cronin A."/>
            <person name="Davis P."/>
            <person name="Feltwell T."/>
            <person name="Fraser A."/>
            <person name="Gentles S."/>
            <person name="Goble A."/>
            <person name="Hamlin N."/>
            <person name="Harris D.E."/>
            <person name="Hidalgo J."/>
            <person name="Hodgson G."/>
            <person name="Holroyd S."/>
            <person name="Hornsby T."/>
            <person name="Howarth S."/>
            <person name="Huckle E.J."/>
            <person name="Hunt S."/>
            <person name="Jagels K."/>
            <person name="James K.D."/>
            <person name="Jones L."/>
            <person name="Jones M."/>
            <person name="Leather S."/>
            <person name="McDonald S."/>
            <person name="McLean J."/>
            <person name="Mooney P."/>
            <person name="Moule S."/>
            <person name="Mungall K.L."/>
            <person name="Murphy L.D."/>
            <person name="Niblett D."/>
            <person name="Odell C."/>
            <person name="Oliver K."/>
            <person name="O'Neil S."/>
            <person name="Pearson D."/>
            <person name="Quail M.A."/>
            <person name="Rabbinowitsch E."/>
            <person name="Rutherford K.M."/>
            <person name="Rutter S."/>
            <person name="Saunders D."/>
            <person name="Seeger K."/>
            <person name="Sharp S."/>
            <person name="Skelton J."/>
            <person name="Simmonds M.N."/>
            <person name="Squares R."/>
            <person name="Squares S."/>
            <person name="Stevens K."/>
            <person name="Taylor K."/>
            <person name="Taylor R.G."/>
            <person name="Tivey A."/>
            <person name="Walsh S.V."/>
            <person name="Warren T."/>
            <person name="Whitehead S."/>
            <person name="Woodward J.R."/>
            <person name="Volckaert G."/>
            <person name="Aert R."/>
            <person name="Robben J."/>
            <person name="Grymonprez B."/>
            <person name="Weltjens I."/>
            <person name="Vanstreels E."/>
            <person name="Rieger M."/>
            <person name="Schaefer M."/>
            <person name="Mueller-Auer S."/>
            <person name="Gabel C."/>
            <person name="Fuchs M."/>
            <person name="Duesterhoeft A."/>
            <person name="Fritzc C."/>
            <person name="Holzer E."/>
            <person name="Moestl D."/>
            <person name="Hilbert H."/>
            <person name="Borzym K."/>
            <person name="Langer I."/>
            <person name="Beck A."/>
            <person name="Lehrach H."/>
            <person name="Reinhardt R."/>
            <person name="Pohl T.M."/>
            <person name="Eger P."/>
            <person name="Zimmermann W."/>
            <person name="Wedler H."/>
            <person name="Wambutt R."/>
            <person name="Purnelle B."/>
            <person name="Goffeau A."/>
            <person name="Cadieu E."/>
            <person name="Dreano S."/>
            <person name="Gloux S."/>
            <person name="Lelaure V."/>
            <person name="Mottier S."/>
            <person name="Galibert F."/>
            <person name="Aves S.J."/>
            <person name="Xiang Z."/>
            <person name="Hunt C."/>
            <person name="Moore K."/>
            <person name="Hurst S.M."/>
            <person name="Lucas M."/>
            <person name="Rochet M."/>
            <person name="Gaillardin C."/>
            <person name="Tallada V.A."/>
            <person name="Garzon A."/>
            <person name="Thode G."/>
            <person name="Daga R.R."/>
            <person name="Cruzado L."/>
            <person name="Jimenez J."/>
            <person name="Sanchez M."/>
            <person name="del Rey F."/>
            <person name="Benito J."/>
            <person name="Dominguez A."/>
            <person name="Revuelta J.L."/>
            <person name="Moreno S."/>
            <person name="Armstrong J."/>
            <person name="Forsburg S.L."/>
            <person name="Cerutti L."/>
            <person name="Lowe T."/>
            <person name="McCombie W.R."/>
            <person name="Paulsen I."/>
            <person name="Potashkin J."/>
            <person name="Shpakovski G.V."/>
            <person name="Ussery D."/>
            <person name="Barrell B.G."/>
            <person name="Nurse P."/>
        </authorList>
    </citation>
    <scope>NUCLEOTIDE SEQUENCE [LARGE SCALE GENOMIC DNA]</scope>
    <source>
        <strain>972 / ATCC 24843</strain>
    </source>
</reference>
<reference key="2">
    <citation type="journal article" date="2011" name="Science">
        <title>Comparative functional genomics of the fission yeasts.</title>
        <authorList>
            <person name="Rhind N."/>
            <person name="Chen Z."/>
            <person name="Yassour M."/>
            <person name="Thompson D.A."/>
            <person name="Haas B.J."/>
            <person name="Habib N."/>
            <person name="Wapinski I."/>
            <person name="Roy S."/>
            <person name="Lin M.F."/>
            <person name="Heiman D.I."/>
            <person name="Young S.K."/>
            <person name="Furuya K."/>
            <person name="Guo Y."/>
            <person name="Pidoux A."/>
            <person name="Chen H.M."/>
            <person name="Robbertse B."/>
            <person name="Goldberg J.M."/>
            <person name="Aoki K."/>
            <person name="Bayne E.H."/>
            <person name="Berlin A.M."/>
            <person name="Desjardins C.A."/>
            <person name="Dobbs E."/>
            <person name="Dukaj L."/>
            <person name="Fan L."/>
            <person name="FitzGerald M.G."/>
            <person name="French C."/>
            <person name="Gujja S."/>
            <person name="Hansen K."/>
            <person name="Keifenheim D."/>
            <person name="Levin J.Z."/>
            <person name="Mosher R.A."/>
            <person name="Mueller C.A."/>
            <person name="Pfiffner J."/>
            <person name="Priest M."/>
            <person name="Russ C."/>
            <person name="Smialowska A."/>
            <person name="Swoboda P."/>
            <person name="Sykes S.M."/>
            <person name="Vaughn M."/>
            <person name="Vengrova S."/>
            <person name="Yoder R."/>
            <person name="Zeng Q."/>
            <person name="Allshire R."/>
            <person name="Baulcombe D."/>
            <person name="Birren B.W."/>
            <person name="Brown W."/>
            <person name="Ekwall K."/>
            <person name="Kellis M."/>
            <person name="Leatherwood J."/>
            <person name="Levin H."/>
            <person name="Margalit H."/>
            <person name="Martienssen R."/>
            <person name="Nieduszynski C.A."/>
            <person name="Spatafora J.W."/>
            <person name="Friedman N."/>
            <person name="Dalgaard J.Z."/>
            <person name="Baumann P."/>
            <person name="Niki H."/>
            <person name="Regev A."/>
            <person name="Nusbaum C."/>
        </authorList>
    </citation>
    <scope>REVISION OF GENE MODEL</scope>
</reference>
<protein>
    <recommendedName>
        <fullName>UPF0768 protein C1952.04c</fullName>
    </recommendedName>
</protein>
<proteinExistence type="inferred from homology"/>
<gene>
    <name type="ORF">SPAC1952.04c</name>
</gene>
<feature type="chain" id="PRO_0000116848" description="UPF0768 protein C1952.04c">
    <location>
        <begin position="1"/>
        <end position="137"/>
    </location>
</feature>
<feature type="region of interest" description="Disordered" evidence="1">
    <location>
        <begin position="79"/>
        <end position="137"/>
    </location>
</feature>
<feature type="compositionally biased region" description="Basic and acidic residues" evidence="1">
    <location>
        <begin position="79"/>
        <end position="93"/>
    </location>
</feature>
<feature type="compositionally biased region" description="Pro residues" evidence="1">
    <location>
        <begin position="119"/>
        <end position="137"/>
    </location>
</feature>